<proteinExistence type="inferred from homology"/>
<accession>Q1R7I1</accession>
<dbReference type="EMBL" id="CP000243">
    <property type="protein sequence ID" value="ABE08683.1"/>
    <property type="molecule type" value="Genomic_DNA"/>
</dbReference>
<dbReference type="RefSeq" id="WP_000082183.1">
    <property type="nucleotide sequence ID" value="NZ_CP064825.1"/>
</dbReference>
<dbReference type="SMR" id="Q1R7I1"/>
<dbReference type="KEGG" id="eci:UTI89_C3234"/>
<dbReference type="HOGENOM" id="CLU_086669_0_0_6"/>
<dbReference type="Proteomes" id="UP000001952">
    <property type="component" value="Chromosome"/>
</dbReference>
<dbReference type="GO" id="GO:0005737">
    <property type="term" value="C:cytoplasm"/>
    <property type="evidence" value="ECO:0007669"/>
    <property type="project" value="UniProtKB-SubCell"/>
</dbReference>
<dbReference type="GO" id="GO:0003677">
    <property type="term" value="F:DNA binding"/>
    <property type="evidence" value="ECO:0007669"/>
    <property type="project" value="InterPro"/>
</dbReference>
<dbReference type="GO" id="GO:0004519">
    <property type="term" value="F:endonuclease activity"/>
    <property type="evidence" value="ECO:0007669"/>
    <property type="project" value="UniProtKB-UniRule"/>
</dbReference>
<dbReference type="GO" id="GO:0006304">
    <property type="term" value="P:DNA modification"/>
    <property type="evidence" value="ECO:0007669"/>
    <property type="project" value="InterPro"/>
</dbReference>
<dbReference type="GO" id="GO:0006298">
    <property type="term" value="P:mismatch repair"/>
    <property type="evidence" value="ECO:0007669"/>
    <property type="project" value="UniProtKB-UniRule"/>
</dbReference>
<dbReference type="CDD" id="cd00583">
    <property type="entry name" value="MutH-like"/>
    <property type="match status" value="1"/>
</dbReference>
<dbReference type="FunFam" id="3.40.600.10:FF:000001">
    <property type="entry name" value="DNA mismatch repair protein MutH"/>
    <property type="match status" value="1"/>
</dbReference>
<dbReference type="Gene3D" id="3.40.600.10">
    <property type="entry name" value="DNA mismatch repair MutH/Restriction endonuclease, type II"/>
    <property type="match status" value="1"/>
</dbReference>
<dbReference type="HAMAP" id="MF_00759">
    <property type="entry name" value="MutH"/>
    <property type="match status" value="1"/>
</dbReference>
<dbReference type="InterPro" id="IPR004230">
    <property type="entry name" value="DNA_mismatch_repair_MutH"/>
</dbReference>
<dbReference type="InterPro" id="IPR011337">
    <property type="entry name" value="DNA_rep_MutH/RE_typeII_Sau3AI"/>
</dbReference>
<dbReference type="InterPro" id="IPR037057">
    <property type="entry name" value="DNA_rep_MutH/T2_RE_sf"/>
</dbReference>
<dbReference type="InterPro" id="IPR011335">
    <property type="entry name" value="Restrct_endonuc-II-like"/>
</dbReference>
<dbReference type="NCBIfam" id="TIGR02248">
    <property type="entry name" value="mutH_TIGR"/>
    <property type="match status" value="1"/>
</dbReference>
<dbReference type="NCBIfam" id="NF003458">
    <property type="entry name" value="PRK05070.1"/>
    <property type="match status" value="1"/>
</dbReference>
<dbReference type="Pfam" id="PF02976">
    <property type="entry name" value="MutH"/>
    <property type="match status" value="1"/>
</dbReference>
<dbReference type="SMART" id="SM00927">
    <property type="entry name" value="MutH"/>
    <property type="match status" value="1"/>
</dbReference>
<dbReference type="SUPFAM" id="SSF52980">
    <property type="entry name" value="Restriction endonuclease-like"/>
    <property type="match status" value="1"/>
</dbReference>
<reference key="1">
    <citation type="journal article" date="2006" name="Proc. Natl. Acad. Sci. U.S.A.">
        <title>Identification of genes subject to positive selection in uropathogenic strains of Escherichia coli: a comparative genomics approach.</title>
        <authorList>
            <person name="Chen S.L."/>
            <person name="Hung C.-S."/>
            <person name="Xu J."/>
            <person name="Reigstad C.S."/>
            <person name="Magrini V."/>
            <person name="Sabo A."/>
            <person name="Blasiar D."/>
            <person name="Bieri T."/>
            <person name="Meyer R.R."/>
            <person name="Ozersky P."/>
            <person name="Armstrong J.R."/>
            <person name="Fulton R.S."/>
            <person name="Latreille J.P."/>
            <person name="Spieth J."/>
            <person name="Hooton T.M."/>
            <person name="Mardis E.R."/>
            <person name="Hultgren S.J."/>
            <person name="Gordon J.I."/>
        </authorList>
    </citation>
    <scope>NUCLEOTIDE SEQUENCE [LARGE SCALE GENOMIC DNA]</scope>
    <source>
        <strain>UTI89 / UPEC</strain>
    </source>
</reference>
<sequence>MSQPRPLLSPPETEEQLLAQAQQLSGYTLGELAALAGLVTPENLKRDKGWIGVLLEIWLGASAGSKPEQDFAALGVELKTIPVDSLGRPLETTFVCVAPLTGNSGVTWETSHVRHKLKRVLWIPVEGERSIPLAKRRVGSPLLWSPNEEEDRQLREDWEELMDMIVLGQIERITARHGEYLQIRPKAANAKALTEAIGARGERILTLPRGFYLKKNFTSALLARHFLIQ</sequence>
<keyword id="KW-0963">Cytoplasm</keyword>
<keyword id="KW-0227">DNA damage</keyword>
<keyword id="KW-0234">DNA repair</keyword>
<keyword id="KW-0255">Endonuclease</keyword>
<keyword id="KW-0378">Hydrolase</keyword>
<keyword id="KW-0540">Nuclease</keyword>
<gene>
    <name evidence="1" type="primary">mutH</name>
    <name type="ordered locus">UTI89_C3234</name>
</gene>
<evidence type="ECO:0000255" key="1">
    <source>
        <dbReference type="HAMAP-Rule" id="MF_00759"/>
    </source>
</evidence>
<comment type="function">
    <text evidence="1">Sequence-specific endonuclease that cleaves unmethylated GATC sequences. It is involved in DNA mismatch repair.</text>
</comment>
<comment type="subcellular location">
    <subcellularLocation>
        <location evidence="1">Cytoplasm</location>
    </subcellularLocation>
</comment>
<comment type="similarity">
    <text evidence="1">Belongs to the MutH family.</text>
</comment>
<organism>
    <name type="scientific">Escherichia coli (strain UTI89 / UPEC)</name>
    <dbReference type="NCBI Taxonomy" id="364106"/>
    <lineage>
        <taxon>Bacteria</taxon>
        <taxon>Pseudomonadati</taxon>
        <taxon>Pseudomonadota</taxon>
        <taxon>Gammaproteobacteria</taxon>
        <taxon>Enterobacterales</taxon>
        <taxon>Enterobacteriaceae</taxon>
        <taxon>Escherichia</taxon>
    </lineage>
</organism>
<feature type="chain" id="PRO_1000046696" description="DNA mismatch repair protein MutH">
    <location>
        <begin position="1"/>
        <end position="229"/>
    </location>
</feature>
<name>MUTH_ECOUT</name>
<protein>
    <recommendedName>
        <fullName evidence="1">DNA mismatch repair protein MutH</fullName>
    </recommendedName>
    <alternativeName>
        <fullName evidence="1">Methyl-directed mismatch repair protein</fullName>
    </alternativeName>
</protein>